<accession>A5F4C5</accession>
<accession>C3M2I9</accession>
<evidence type="ECO:0000255" key="1">
    <source>
        <dbReference type="HAMAP-Rule" id="MF_01852"/>
    </source>
</evidence>
<dbReference type="EC" id="2.7.7.87" evidence="1"/>
<dbReference type="EMBL" id="CP000627">
    <property type="protein sequence ID" value="ABQ19829.1"/>
    <property type="molecule type" value="Genomic_DNA"/>
</dbReference>
<dbReference type="EMBL" id="CP001235">
    <property type="protein sequence ID" value="ACP08153.1"/>
    <property type="molecule type" value="Genomic_DNA"/>
</dbReference>
<dbReference type="SMR" id="A5F4C5"/>
<dbReference type="KEGG" id="vco:VC0395_A2466"/>
<dbReference type="KEGG" id="vcr:VC395_0126"/>
<dbReference type="PATRIC" id="fig|345073.21.peg.117"/>
<dbReference type="eggNOG" id="COG0009">
    <property type="taxonomic scope" value="Bacteria"/>
</dbReference>
<dbReference type="HOGENOM" id="CLU_031397_6_0_6"/>
<dbReference type="OrthoDB" id="9814580at2"/>
<dbReference type="Proteomes" id="UP000000249">
    <property type="component" value="Chromosome 2"/>
</dbReference>
<dbReference type="GO" id="GO:0005737">
    <property type="term" value="C:cytoplasm"/>
    <property type="evidence" value="ECO:0007669"/>
    <property type="project" value="UniProtKB-SubCell"/>
</dbReference>
<dbReference type="GO" id="GO:0005524">
    <property type="term" value="F:ATP binding"/>
    <property type="evidence" value="ECO:0007669"/>
    <property type="project" value="UniProtKB-UniRule"/>
</dbReference>
<dbReference type="GO" id="GO:0003725">
    <property type="term" value="F:double-stranded RNA binding"/>
    <property type="evidence" value="ECO:0007669"/>
    <property type="project" value="InterPro"/>
</dbReference>
<dbReference type="GO" id="GO:0061710">
    <property type="term" value="F:L-threonylcarbamoyladenylate synthase"/>
    <property type="evidence" value="ECO:0007669"/>
    <property type="project" value="UniProtKB-EC"/>
</dbReference>
<dbReference type="GO" id="GO:0000049">
    <property type="term" value="F:tRNA binding"/>
    <property type="evidence" value="ECO:0007669"/>
    <property type="project" value="TreeGrafter"/>
</dbReference>
<dbReference type="GO" id="GO:0006450">
    <property type="term" value="P:regulation of translational fidelity"/>
    <property type="evidence" value="ECO:0007669"/>
    <property type="project" value="TreeGrafter"/>
</dbReference>
<dbReference type="GO" id="GO:0002949">
    <property type="term" value="P:tRNA threonylcarbamoyladenosine modification"/>
    <property type="evidence" value="ECO:0007669"/>
    <property type="project" value="UniProtKB-UniRule"/>
</dbReference>
<dbReference type="FunFam" id="3.90.870.10:FF:000004">
    <property type="entry name" value="Threonylcarbamoyl-AMP synthase"/>
    <property type="match status" value="1"/>
</dbReference>
<dbReference type="Gene3D" id="3.90.870.10">
    <property type="entry name" value="DHBP synthase"/>
    <property type="match status" value="1"/>
</dbReference>
<dbReference type="HAMAP" id="MF_01852">
    <property type="entry name" value="TsaC"/>
    <property type="match status" value="1"/>
</dbReference>
<dbReference type="InterPro" id="IPR017945">
    <property type="entry name" value="DHBP_synth_RibB-like_a/b_dom"/>
</dbReference>
<dbReference type="InterPro" id="IPR006070">
    <property type="entry name" value="Sua5-like_dom"/>
</dbReference>
<dbReference type="InterPro" id="IPR023535">
    <property type="entry name" value="TC-AMP_synthase"/>
</dbReference>
<dbReference type="InterPro" id="IPR050156">
    <property type="entry name" value="TC-AMP_synthase_SUA5"/>
</dbReference>
<dbReference type="NCBIfam" id="TIGR00057">
    <property type="entry name" value="L-threonylcarbamoyladenylate synthase"/>
    <property type="match status" value="1"/>
</dbReference>
<dbReference type="PANTHER" id="PTHR17490">
    <property type="entry name" value="SUA5"/>
    <property type="match status" value="1"/>
</dbReference>
<dbReference type="PANTHER" id="PTHR17490:SF18">
    <property type="entry name" value="THREONYLCARBAMOYL-AMP SYNTHASE"/>
    <property type="match status" value="1"/>
</dbReference>
<dbReference type="Pfam" id="PF01300">
    <property type="entry name" value="Sua5_yciO_yrdC"/>
    <property type="match status" value="1"/>
</dbReference>
<dbReference type="SUPFAM" id="SSF55821">
    <property type="entry name" value="YrdC/RibB"/>
    <property type="match status" value="1"/>
</dbReference>
<dbReference type="PROSITE" id="PS51163">
    <property type="entry name" value="YRDC"/>
    <property type="match status" value="1"/>
</dbReference>
<sequence>MALVENLQQAVDALRKGCVIAYPTEGVFGLGCDPDNQTAMLRLLAIKQRPVEKGVILIAASYAQLRPYVDETQLTAEQLTQVLASWPAPLTWVMPASGDTPSWVRGQFDTVAVRVSDHPVVQKLCLAFGKPLTSTSANLSGQPACVTQQEVMVQLGNQIAVVVEGKTSGRHGPSEIRDARSLQVLRQG</sequence>
<name>TSAC_VIBC3</name>
<feature type="chain" id="PRO_0000353002" description="Threonylcarbamoyl-AMP synthase">
    <location>
        <begin position="1"/>
        <end position="188"/>
    </location>
</feature>
<feature type="domain" description="YrdC-like" evidence="1">
    <location>
        <begin position="4"/>
        <end position="188"/>
    </location>
</feature>
<comment type="function">
    <text evidence="1">Required for the formation of a threonylcarbamoyl group on adenosine at position 37 (t(6)A37) in tRNAs that read codons beginning with adenine. Catalyzes the conversion of L-threonine, HCO(3)(-)/CO(2) and ATP to give threonylcarbamoyl-AMP (TC-AMP) as the acyladenylate intermediate, with the release of diphosphate.</text>
</comment>
<comment type="catalytic activity">
    <reaction evidence="1">
        <text>L-threonine + hydrogencarbonate + ATP = L-threonylcarbamoyladenylate + diphosphate + H2O</text>
        <dbReference type="Rhea" id="RHEA:36407"/>
        <dbReference type="ChEBI" id="CHEBI:15377"/>
        <dbReference type="ChEBI" id="CHEBI:17544"/>
        <dbReference type="ChEBI" id="CHEBI:30616"/>
        <dbReference type="ChEBI" id="CHEBI:33019"/>
        <dbReference type="ChEBI" id="CHEBI:57926"/>
        <dbReference type="ChEBI" id="CHEBI:73682"/>
        <dbReference type="EC" id="2.7.7.87"/>
    </reaction>
</comment>
<comment type="subcellular location">
    <subcellularLocation>
        <location evidence="1">Cytoplasm</location>
    </subcellularLocation>
</comment>
<comment type="similarity">
    <text evidence="1">Belongs to the SUA5 family. TsaC subfamily.</text>
</comment>
<protein>
    <recommendedName>
        <fullName evidence="1">Threonylcarbamoyl-AMP synthase</fullName>
        <shortName evidence="1">TC-AMP synthase</shortName>
        <ecNumber evidence="1">2.7.7.87</ecNumber>
    </recommendedName>
    <alternativeName>
        <fullName evidence="1">L-threonylcarbamoyladenylate synthase</fullName>
    </alternativeName>
    <alternativeName>
        <fullName evidence="1">t(6)A37 threonylcarbamoyladenosine biosynthesis protein TsaC</fullName>
    </alternativeName>
    <alternativeName>
        <fullName evidence="1">tRNA threonylcarbamoyladenosine biosynthesis protein TsaC</fullName>
    </alternativeName>
</protein>
<keyword id="KW-0067">ATP-binding</keyword>
<keyword id="KW-0963">Cytoplasm</keyword>
<keyword id="KW-0547">Nucleotide-binding</keyword>
<keyword id="KW-0548">Nucleotidyltransferase</keyword>
<keyword id="KW-0808">Transferase</keyword>
<keyword id="KW-0819">tRNA processing</keyword>
<gene>
    <name evidence="1" type="primary">tsaC</name>
    <name type="synonym">rimN</name>
    <name type="ordered locus">VC0395_A2466</name>
    <name type="ordered locus">VC395_0126</name>
</gene>
<reference key="1">
    <citation type="submission" date="2007-03" db="EMBL/GenBank/DDBJ databases">
        <authorList>
            <person name="Heidelberg J."/>
        </authorList>
    </citation>
    <scope>NUCLEOTIDE SEQUENCE [LARGE SCALE GENOMIC DNA]</scope>
    <source>
        <strain>ATCC 39541 / Classical Ogawa 395 / O395</strain>
    </source>
</reference>
<reference key="2">
    <citation type="journal article" date="2008" name="PLoS ONE">
        <title>A recalibrated molecular clock and independent origins for the cholera pandemic clones.</title>
        <authorList>
            <person name="Feng L."/>
            <person name="Reeves P.R."/>
            <person name="Lan R."/>
            <person name="Ren Y."/>
            <person name="Gao C."/>
            <person name="Zhou Z."/>
            <person name="Ren Y."/>
            <person name="Cheng J."/>
            <person name="Wang W."/>
            <person name="Wang J."/>
            <person name="Qian W."/>
            <person name="Li D."/>
            <person name="Wang L."/>
        </authorList>
    </citation>
    <scope>NUCLEOTIDE SEQUENCE [LARGE SCALE GENOMIC DNA]</scope>
    <source>
        <strain>ATCC 39541 / Classical Ogawa 395 / O395</strain>
    </source>
</reference>
<proteinExistence type="inferred from homology"/>
<organism>
    <name type="scientific">Vibrio cholerae serotype O1 (strain ATCC 39541 / Classical Ogawa 395 / O395)</name>
    <dbReference type="NCBI Taxonomy" id="345073"/>
    <lineage>
        <taxon>Bacteria</taxon>
        <taxon>Pseudomonadati</taxon>
        <taxon>Pseudomonadota</taxon>
        <taxon>Gammaproteobacteria</taxon>
        <taxon>Vibrionales</taxon>
        <taxon>Vibrionaceae</taxon>
        <taxon>Vibrio</taxon>
    </lineage>
</organism>